<organism>
    <name type="scientific">Canis lupus familiaris</name>
    <name type="common">Dog</name>
    <name type="synonym">Canis familiaris</name>
    <dbReference type="NCBI Taxonomy" id="9615"/>
    <lineage>
        <taxon>Eukaryota</taxon>
        <taxon>Metazoa</taxon>
        <taxon>Chordata</taxon>
        <taxon>Craniata</taxon>
        <taxon>Vertebrata</taxon>
        <taxon>Euteleostomi</taxon>
        <taxon>Mammalia</taxon>
        <taxon>Eutheria</taxon>
        <taxon>Laurasiatheria</taxon>
        <taxon>Carnivora</taxon>
        <taxon>Caniformia</taxon>
        <taxon>Canidae</taxon>
        <taxon>Canis</taxon>
    </lineage>
</organism>
<protein>
    <recommendedName>
        <fullName evidence="2">Galactocerebrosidase</fullName>
        <shortName>GALCERase</shortName>
        <ecNumber evidence="5">3.2.1.46</ecNumber>
    </recommendedName>
    <alternativeName>
        <fullName>Galactocerebroside beta-galactosidase</fullName>
    </alternativeName>
    <alternativeName>
        <fullName evidence="2">Galactosylceramidase</fullName>
    </alternativeName>
    <alternativeName>
        <fullName>Galactosylceramide beta-galactosidase</fullName>
    </alternativeName>
</protein>
<evidence type="ECO:0000250" key="1"/>
<evidence type="ECO:0000250" key="2">
    <source>
        <dbReference type="UniProtKB" id="P54803"/>
    </source>
</evidence>
<evidence type="ECO:0000250" key="3">
    <source>
        <dbReference type="UniProtKB" id="P54818"/>
    </source>
</evidence>
<evidence type="ECO:0000255" key="4"/>
<evidence type="ECO:0000269" key="5">
    <source>
    </source>
</evidence>
<evidence type="ECO:0000305" key="6"/>
<keyword id="KW-0225">Disease variant</keyword>
<keyword id="KW-1015">Disulfide bond</keyword>
<keyword id="KW-0325">Glycoprotein</keyword>
<keyword id="KW-0326">Glycosidase</keyword>
<keyword id="KW-0378">Hydrolase</keyword>
<keyword id="KW-0442">Lipid degradation</keyword>
<keyword id="KW-0443">Lipid metabolism</keyword>
<keyword id="KW-0458">Lysosome</keyword>
<keyword id="KW-1185">Reference proteome</keyword>
<keyword id="KW-0732">Signal</keyword>
<keyword id="KW-0746">Sphingolipid metabolism</keyword>
<proteinExistence type="evidence at protein level"/>
<sequence length="669" mass="75317">MTAAAGSAGHAAVPLLLCALLVPGGAYVLDDSDGLGREFDGVGAVSGGGATSRLLVNYPEPYRSQILDYLFKPNFGASLHILKVEIGGDGQTTDGTEPSHMHYALDENFFRGYEWWLMKEAKKRNPNIILMGLPWSFPGWIGKGFNWPYVNLQLTAYYIMTWIVGAKHYHDLDIDYIGIWNERSFDINYIKVLRRMLNYQGLDRVKIIASDNLWEPISASMLLDSELLKVIDVIGAHYPGTHTVKDAKLTKKKLWSSEDFSTLNSDVGAGCLGRILNQNYVNGYMTATIAWNLVASYYEQLPYGRCGLMTAQEPWSGHYVVESPIWVSAHTTQFTQPGWYYLKTVGHLEKGGSYVALTDGLGNLTIIVETMSHKQSACIRPFLPYFNVSRQFATFVLKGSFSEIPELQVWYTKLGKPSERYLFKQLDSLWLLDSSSTFTLELQEDEIFTLTTLTVGSKGSYPLPPKSEPFPQIYEDDFDVDYPFFSEAPNFADQTGVFEYFTNIEDPGEHRFTLRQVLNQRPITWAADAYNTISIIGDYKWSNLTVRCDVYIETPEKGGVFIAGRVNKGGILIRSARGIFFWIFANGTYRVTGDLAGWVIYALGRVDVTAKKWYTLTLIIKGRLSSGMLNGKTVWKNIPVSFPKNGWAAIGTHSFEFAQFDNFHVEATR</sequence>
<feature type="signal peptide" evidence="1">
    <location>
        <begin position="1"/>
        <end position="26"/>
    </location>
</feature>
<feature type="chain" id="PRO_0000012229" description="Galactocerebrosidase">
    <location>
        <begin position="27"/>
        <end position="669"/>
    </location>
</feature>
<feature type="active site" description="Proton donor/acceptor" evidence="1">
    <location>
        <position position="182"/>
    </location>
</feature>
<feature type="active site" description="Nucleophile" evidence="1">
    <location>
        <position position="258"/>
    </location>
</feature>
<feature type="binding site" evidence="1">
    <location>
        <position position="93"/>
    </location>
    <ligand>
        <name>substrate</name>
    </ligand>
</feature>
<feature type="binding site" evidence="1">
    <location>
        <position position="135"/>
    </location>
    <ligand>
        <name>substrate</name>
    </ligand>
</feature>
<feature type="binding site" evidence="1">
    <location>
        <position position="181"/>
    </location>
    <ligand>
        <name>substrate</name>
    </ligand>
</feature>
<feature type="binding site" evidence="1">
    <location>
        <position position="380"/>
    </location>
    <ligand>
        <name>substrate</name>
    </ligand>
</feature>
<feature type="glycosylation site" description="N-linked (GlcNAc...) asparagine" evidence="4">
    <location>
        <position position="363"/>
    </location>
</feature>
<feature type="glycosylation site" description="N-linked (GlcNAc...) asparagine" evidence="4">
    <location>
        <position position="387"/>
    </location>
</feature>
<feature type="glycosylation site" description="N-linked (GlcNAc...) asparagine" evidence="4">
    <location>
        <position position="543"/>
    </location>
</feature>
<feature type="glycosylation site" description="N-linked (GlcNAc...) asparagine" evidence="4">
    <location>
        <position position="586"/>
    </location>
</feature>
<feature type="disulfide bond" evidence="1">
    <location>
        <begin position="271"/>
        <end position="378"/>
    </location>
</feature>
<feature type="sequence variant" description="In GLD." evidence="5">
    <original>Y</original>
    <variation>S</variation>
    <location>
        <position position="158"/>
    </location>
</feature>
<feature type="sequence variant" description="In GLD." evidence="5">
    <original>P</original>
    <variation>S</variation>
    <location>
        <position position="639"/>
    </location>
</feature>
<reference key="1">
    <citation type="journal article" date="1996" name="Genomics">
        <title>Cloning of the canine GALC cDNA and identification of the mutation causing globoid cell leukodystrophy in West Highland White and Cairn terriers.</title>
        <authorList>
            <person name="Victoria T."/>
            <person name="Rafi M.A."/>
            <person name="Wenger D.A."/>
        </authorList>
    </citation>
    <scope>NUCLEOTIDE SEQUENCE [MRNA]</scope>
    <scope>FUNCTION</scope>
    <scope>CATALYTIC ACTIVITY</scope>
    <scope>ROLE IN DISEASE</scope>
    <scope>VARIANTS GLD SER-158 AND SER-639</scope>
</reference>
<comment type="function">
    <text evidence="2 5">Hydrolyzes the galactose ester bonds of glycolipids such as galactosylceramide and galactosylsphingosine (PubMed:8661004). Enzyme with very low activity responsible for the lysosomal catabolism of galactosylceramide, a major lipid in myelin, kidney and epithelial cells of small intestine and colon (By similarity).</text>
</comment>
<comment type="catalytic activity">
    <reaction evidence="5">
        <text>a beta-D-galactosyl-(1&lt;-&gt;1')-N-acylsphing-4-enine + H2O = an N-acylsphing-4-enine + D-galactose</text>
        <dbReference type="Rhea" id="RHEA:14297"/>
        <dbReference type="ChEBI" id="CHEBI:4139"/>
        <dbReference type="ChEBI" id="CHEBI:15377"/>
        <dbReference type="ChEBI" id="CHEBI:18390"/>
        <dbReference type="ChEBI" id="CHEBI:52639"/>
        <dbReference type="EC" id="3.2.1.46"/>
    </reaction>
</comment>
<comment type="catalytic activity">
    <reaction evidence="2">
        <text>beta-D-galactosyl-(1&lt;-&gt;1)-sphing-4-enine + H2O = sphing-4-enine + D-galactose</text>
        <dbReference type="Rhea" id="RHEA:43908"/>
        <dbReference type="ChEBI" id="CHEBI:4139"/>
        <dbReference type="ChEBI" id="CHEBI:15377"/>
        <dbReference type="ChEBI" id="CHEBI:57756"/>
        <dbReference type="ChEBI" id="CHEBI:57934"/>
    </reaction>
    <physiologicalReaction direction="left-to-right" evidence="2">
        <dbReference type="Rhea" id="RHEA:43909"/>
    </physiologicalReaction>
</comment>
<comment type="catalytic activity">
    <reaction evidence="3">
        <text>a D-galactosylceramide + H2O = an N-acyl-sphingoid base + D-galactose</text>
        <dbReference type="Rhea" id="RHEA:43412"/>
        <dbReference type="ChEBI" id="CHEBI:4139"/>
        <dbReference type="ChEBI" id="CHEBI:15377"/>
        <dbReference type="ChEBI" id="CHEBI:36498"/>
        <dbReference type="ChEBI" id="CHEBI:83273"/>
    </reaction>
    <physiologicalReaction direction="left-to-right" evidence="3">
        <dbReference type="Rhea" id="RHEA:43413"/>
    </physiologicalReaction>
</comment>
<comment type="subcellular location">
    <subcellularLocation>
        <location evidence="1">Lysosome</location>
    </subcellularLocation>
</comment>
<comment type="disease">
    <text>Defects in GALC are the cause of globoid cell leukodystrophy (GLD). This deficiency results in the insufficient catabolism of several galactolipids that are important in the production of normal myelin.</text>
</comment>
<comment type="similarity">
    <text evidence="6">Belongs to the glycosyl hydrolase 59 family.</text>
</comment>
<gene>
    <name evidence="2" type="primary">GALC</name>
</gene>
<accession>P54804</accession>
<name>GALC_CANLF</name>
<dbReference type="EC" id="3.2.1.46" evidence="5"/>
<dbReference type="EMBL" id="L76184">
    <property type="protein sequence ID" value="AAB37752.1"/>
    <property type="molecule type" value="mRNA"/>
</dbReference>
<dbReference type="RefSeq" id="NP_001003238.1">
    <property type="nucleotide sequence ID" value="NM_001003238.1"/>
</dbReference>
<dbReference type="SMR" id="P54804"/>
<dbReference type="FunCoup" id="P54804">
    <property type="interactions" value="73"/>
</dbReference>
<dbReference type="STRING" id="9615.ENSCAFP00000031633"/>
<dbReference type="CAZy" id="GH59">
    <property type="family name" value="Glycoside Hydrolase Family 59"/>
</dbReference>
<dbReference type="GlyCosmos" id="P54804">
    <property type="glycosylation" value="4 sites, No reported glycans"/>
</dbReference>
<dbReference type="PaxDb" id="9612-ENSCAFP00000031633"/>
<dbReference type="GeneID" id="403916"/>
<dbReference type="KEGG" id="cfa:403916"/>
<dbReference type="CTD" id="2581"/>
<dbReference type="eggNOG" id="ENOG502QQ1Q">
    <property type="taxonomic scope" value="Eukaryota"/>
</dbReference>
<dbReference type="InParanoid" id="P54804"/>
<dbReference type="OrthoDB" id="440760at2759"/>
<dbReference type="Proteomes" id="UP000002254">
    <property type="component" value="Unplaced"/>
</dbReference>
<dbReference type="Proteomes" id="UP000694429">
    <property type="component" value="Unplaced"/>
</dbReference>
<dbReference type="Proteomes" id="UP000694542">
    <property type="component" value="Unplaced"/>
</dbReference>
<dbReference type="Proteomes" id="UP000805418">
    <property type="component" value="Unplaced"/>
</dbReference>
<dbReference type="GO" id="GO:0005764">
    <property type="term" value="C:lysosome"/>
    <property type="evidence" value="ECO:0000318"/>
    <property type="project" value="GO_Central"/>
</dbReference>
<dbReference type="GO" id="GO:0016020">
    <property type="term" value="C:membrane"/>
    <property type="evidence" value="ECO:0007669"/>
    <property type="project" value="GOC"/>
</dbReference>
<dbReference type="GO" id="GO:0004336">
    <property type="term" value="F:galactosylceramidase activity"/>
    <property type="evidence" value="ECO:0000250"/>
    <property type="project" value="UniProtKB"/>
</dbReference>
<dbReference type="GO" id="GO:0006683">
    <property type="term" value="P:galactosylceramide catabolic process"/>
    <property type="evidence" value="ECO:0000250"/>
    <property type="project" value="UniProtKB"/>
</dbReference>
<dbReference type="FunFam" id="2.60.120.560:FF:000001">
    <property type="entry name" value="galactocerebrosidase precursor"/>
    <property type="match status" value="1"/>
</dbReference>
<dbReference type="FunFam" id="3.20.20.70:FF:000091">
    <property type="entry name" value="galactocerebrosidase precursor"/>
    <property type="match status" value="1"/>
</dbReference>
<dbReference type="FunFam" id="3.20.20.80:FF:000026">
    <property type="entry name" value="galactocerebrosidase precursor"/>
    <property type="match status" value="1"/>
</dbReference>
<dbReference type="Gene3D" id="3.20.20.70">
    <property type="entry name" value="Aldolase class I"/>
    <property type="match status" value="1"/>
</dbReference>
<dbReference type="Gene3D" id="2.60.120.560">
    <property type="entry name" value="Exo-inulinase, domain 1"/>
    <property type="match status" value="1"/>
</dbReference>
<dbReference type="Gene3D" id="3.20.20.80">
    <property type="entry name" value="Glycosidases"/>
    <property type="match status" value="1"/>
</dbReference>
<dbReference type="InterPro" id="IPR013785">
    <property type="entry name" value="Aldolase_TIM"/>
</dbReference>
<dbReference type="InterPro" id="IPR049162">
    <property type="entry name" value="GH59_C"/>
</dbReference>
<dbReference type="InterPro" id="IPR049161">
    <property type="entry name" value="GH59_cat"/>
</dbReference>
<dbReference type="InterPro" id="IPR001286">
    <property type="entry name" value="Glyco_hydro_59"/>
</dbReference>
<dbReference type="InterPro" id="IPR035394">
    <property type="entry name" value="Glyco_hydro_59_dom"/>
</dbReference>
<dbReference type="InterPro" id="IPR017853">
    <property type="entry name" value="Glycoside_hydrolase_SF"/>
</dbReference>
<dbReference type="PANTHER" id="PTHR15172">
    <property type="entry name" value="GALACTOCEREBROSIDASE"/>
    <property type="match status" value="1"/>
</dbReference>
<dbReference type="PANTHER" id="PTHR15172:SF1">
    <property type="entry name" value="GALACTOCEREBROSIDASE"/>
    <property type="match status" value="1"/>
</dbReference>
<dbReference type="Pfam" id="PF02057">
    <property type="entry name" value="Glyco_hydro_59"/>
    <property type="match status" value="1"/>
</dbReference>
<dbReference type="Pfam" id="PF21708">
    <property type="entry name" value="Glyco_hydro_59_C"/>
    <property type="match status" value="1"/>
</dbReference>
<dbReference type="Pfam" id="PF17387">
    <property type="entry name" value="Glyco_hydro_59M"/>
    <property type="match status" value="1"/>
</dbReference>
<dbReference type="PRINTS" id="PR00850">
    <property type="entry name" value="GLHYDRLASE59"/>
</dbReference>
<dbReference type="SUPFAM" id="SSF51445">
    <property type="entry name" value="(Trans)glycosidases"/>
    <property type="match status" value="1"/>
</dbReference>